<reference key="1">
    <citation type="submission" date="2004-04" db="EMBL/GenBank/DDBJ databases">
        <title>Molecular phylogenetics and diversification of South American grass mice, genus Akodon.</title>
        <authorList>
            <person name="Smith M.F."/>
            <person name="Patton J.L."/>
        </authorList>
    </citation>
    <scope>NUCLEOTIDE SEQUENCE [GENOMIC DNA]</scope>
</reference>
<feature type="chain" id="PRO_0000060544" description="Cytochrome b">
    <location>
        <begin position="1"/>
        <end position="379"/>
    </location>
</feature>
<feature type="transmembrane region" description="Helical" evidence="2">
    <location>
        <begin position="33"/>
        <end position="53"/>
    </location>
</feature>
<feature type="transmembrane region" description="Helical" evidence="2">
    <location>
        <begin position="77"/>
        <end position="98"/>
    </location>
</feature>
<feature type="transmembrane region" description="Helical" evidence="2">
    <location>
        <begin position="113"/>
        <end position="133"/>
    </location>
</feature>
<feature type="transmembrane region" description="Helical" evidence="2">
    <location>
        <begin position="178"/>
        <end position="198"/>
    </location>
</feature>
<feature type="transmembrane region" description="Helical" evidence="2">
    <location>
        <begin position="226"/>
        <end position="246"/>
    </location>
</feature>
<feature type="transmembrane region" description="Helical" evidence="2">
    <location>
        <begin position="288"/>
        <end position="308"/>
    </location>
</feature>
<feature type="transmembrane region" description="Helical" evidence="2">
    <location>
        <begin position="320"/>
        <end position="340"/>
    </location>
</feature>
<feature type="transmembrane region" description="Helical" evidence="2">
    <location>
        <begin position="347"/>
        <end position="367"/>
    </location>
</feature>
<feature type="binding site" description="axial binding residue" evidence="2">
    <location>
        <position position="83"/>
    </location>
    <ligand>
        <name>heme b</name>
        <dbReference type="ChEBI" id="CHEBI:60344"/>
        <label>b562</label>
    </ligand>
    <ligandPart>
        <name>Fe</name>
        <dbReference type="ChEBI" id="CHEBI:18248"/>
    </ligandPart>
</feature>
<feature type="binding site" description="axial binding residue" evidence="2">
    <location>
        <position position="97"/>
    </location>
    <ligand>
        <name>heme b</name>
        <dbReference type="ChEBI" id="CHEBI:60344"/>
        <label>b566</label>
    </ligand>
    <ligandPart>
        <name>Fe</name>
        <dbReference type="ChEBI" id="CHEBI:18248"/>
    </ligandPart>
</feature>
<feature type="binding site" description="axial binding residue" evidence="2">
    <location>
        <position position="182"/>
    </location>
    <ligand>
        <name>heme b</name>
        <dbReference type="ChEBI" id="CHEBI:60344"/>
        <label>b562</label>
    </ligand>
    <ligandPart>
        <name>Fe</name>
        <dbReference type="ChEBI" id="CHEBI:18248"/>
    </ligandPart>
</feature>
<feature type="binding site" description="axial binding residue" evidence="2">
    <location>
        <position position="196"/>
    </location>
    <ligand>
        <name>heme b</name>
        <dbReference type="ChEBI" id="CHEBI:60344"/>
        <label>b566</label>
    </ligand>
    <ligandPart>
        <name>Fe</name>
        <dbReference type="ChEBI" id="CHEBI:18248"/>
    </ligandPart>
</feature>
<feature type="binding site" evidence="2">
    <location>
        <position position="201"/>
    </location>
    <ligand>
        <name>a ubiquinone</name>
        <dbReference type="ChEBI" id="CHEBI:16389"/>
    </ligand>
</feature>
<gene>
    <name type="primary">MT-CYB</name>
    <name type="synonym">COB</name>
    <name type="synonym">CYTB</name>
    <name type="synonym">MTCYB</name>
</gene>
<name>CYB_AKODA</name>
<protein>
    <recommendedName>
        <fullName>Cytochrome b</fullName>
    </recommendedName>
    <alternativeName>
        <fullName>Complex III subunit 3</fullName>
    </alternativeName>
    <alternativeName>
        <fullName>Complex III subunit III</fullName>
    </alternativeName>
    <alternativeName>
        <fullName>Cytochrome b-c1 complex subunit 3</fullName>
    </alternativeName>
    <alternativeName>
        <fullName>Ubiquinol-cytochrome-c reductase complex cytochrome b subunit</fullName>
    </alternativeName>
</protein>
<proteinExistence type="inferred from homology"/>
<evidence type="ECO:0000250" key="1"/>
<evidence type="ECO:0000250" key="2">
    <source>
        <dbReference type="UniProtKB" id="P00157"/>
    </source>
</evidence>
<evidence type="ECO:0000255" key="3">
    <source>
        <dbReference type="PROSITE-ProRule" id="PRU00967"/>
    </source>
</evidence>
<evidence type="ECO:0000255" key="4">
    <source>
        <dbReference type="PROSITE-ProRule" id="PRU00968"/>
    </source>
</evidence>
<accession>Q5QFW6</accession>
<keyword id="KW-0249">Electron transport</keyword>
<keyword id="KW-0349">Heme</keyword>
<keyword id="KW-0408">Iron</keyword>
<keyword id="KW-0472">Membrane</keyword>
<keyword id="KW-0479">Metal-binding</keyword>
<keyword id="KW-0496">Mitochondrion</keyword>
<keyword id="KW-0999">Mitochondrion inner membrane</keyword>
<keyword id="KW-0679">Respiratory chain</keyword>
<keyword id="KW-0812">Transmembrane</keyword>
<keyword id="KW-1133">Transmembrane helix</keyword>
<keyword id="KW-0813">Transport</keyword>
<keyword id="KW-0830">Ubiquinone</keyword>
<sequence>MKILRKNHPLFKIINHSFIDLPTPSNISSWWNFGSLLGMCLMIQILTGLFLAMHYTSDTTTAFSSVAHICRDVNYGWLIRYLHANGASMFFICLFIHVGRGIYYGSYVLSETWNIGIILFFTTMATAFVGYVLPWGQMSFWGATVITNLLSAIPYIGSMLVEWIWGGFSVDKATLTRFFAFHFILPFIITAFVLVHLLFLHETGSNNPSGLNSNSDKIPFHPYYTIKDLLGILFLLMALMILALFFPDILGDPDNYTPANPLNTPAHIKPEWYFLFAYAILRSIPNKLGGVLALLLSILILMAFPLLNTSKQHGLIFRPITQIIYWILIANLLVLTWIGGQPVEYPFTMIGQIASITYFTIILILMPVSNTIENNIIKL</sequence>
<organism>
    <name type="scientific">Akodon dayi</name>
    <name type="common">Day's grass mouse</name>
    <dbReference type="NCBI Taxonomy" id="291113"/>
    <lineage>
        <taxon>Eukaryota</taxon>
        <taxon>Metazoa</taxon>
        <taxon>Chordata</taxon>
        <taxon>Craniata</taxon>
        <taxon>Vertebrata</taxon>
        <taxon>Euteleostomi</taxon>
        <taxon>Mammalia</taxon>
        <taxon>Eutheria</taxon>
        <taxon>Euarchontoglires</taxon>
        <taxon>Glires</taxon>
        <taxon>Rodentia</taxon>
        <taxon>Myomorpha</taxon>
        <taxon>Muroidea</taxon>
        <taxon>Cricetidae</taxon>
        <taxon>Sigmodontinae</taxon>
        <taxon>Akodon</taxon>
    </lineage>
</organism>
<comment type="function">
    <text evidence="2">Component of the ubiquinol-cytochrome c reductase complex (complex III or cytochrome b-c1 complex) that is part of the mitochondrial respiratory chain. The b-c1 complex mediates electron transfer from ubiquinol to cytochrome c. Contributes to the generation of a proton gradient across the mitochondrial membrane that is then used for ATP synthesis.</text>
</comment>
<comment type="cofactor">
    <cofactor evidence="2">
        <name>heme b</name>
        <dbReference type="ChEBI" id="CHEBI:60344"/>
    </cofactor>
    <text evidence="2">Binds 2 heme b groups non-covalently.</text>
</comment>
<comment type="subunit">
    <text evidence="2">The cytochrome bc1 complex contains 11 subunits: 3 respiratory subunits (MT-CYB, CYC1 and UQCRFS1), 2 core proteins (UQCRC1 and UQCRC2) and 6 low-molecular weight proteins (UQCRH/QCR6, UQCRB/QCR7, UQCRQ/QCR8, UQCR10/QCR9, UQCR11/QCR10 and a cleavage product of UQCRFS1). This cytochrome bc1 complex then forms a dimer.</text>
</comment>
<comment type="subcellular location">
    <subcellularLocation>
        <location evidence="2">Mitochondrion inner membrane</location>
        <topology evidence="2">Multi-pass membrane protein</topology>
    </subcellularLocation>
</comment>
<comment type="miscellaneous">
    <text evidence="1">Heme 1 (or BL or b562) is low-potential and absorbs at about 562 nm, and heme 2 (or BH or b566) is high-potential and absorbs at about 566 nm.</text>
</comment>
<comment type="similarity">
    <text evidence="3 4">Belongs to the cytochrome b family.</text>
</comment>
<comment type="caution">
    <text evidence="2">The full-length protein contains only eight transmembrane helices, not nine as predicted by bioinformatics tools.</text>
</comment>
<geneLocation type="mitochondrion"/>
<dbReference type="EMBL" id="AY605059">
    <property type="protein sequence ID" value="AAU05735.1"/>
    <property type="molecule type" value="Genomic_DNA"/>
</dbReference>
<dbReference type="SMR" id="Q5QFW6"/>
<dbReference type="GO" id="GO:0005743">
    <property type="term" value="C:mitochondrial inner membrane"/>
    <property type="evidence" value="ECO:0007669"/>
    <property type="project" value="UniProtKB-SubCell"/>
</dbReference>
<dbReference type="GO" id="GO:0045275">
    <property type="term" value="C:respiratory chain complex III"/>
    <property type="evidence" value="ECO:0007669"/>
    <property type="project" value="InterPro"/>
</dbReference>
<dbReference type="GO" id="GO:0046872">
    <property type="term" value="F:metal ion binding"/>
    <property type="evidence" value="ECO:0007669"/>
    <property type="project" value="UniProtKB-KW"/>
</dbReference>
<dbReference type="GO" id="GO:0008121">
    <property type="term" value="F:ubiquinol-cytochrome-c reductase activity"/>
    <property type="evidence" value="ECO:0007669"/>
    <property type="project" value="InterPro"/>
</dbReference>
<dbReference type="GO" id="GO:0006122">
    <property type="term" value="P:mitochondrial electron transport, ubiquinol to cytochrome c"/>
    <property type="evidence" value="ECO:0007669"/>
    <property type="project" value="TreeGrafter"/>
</dbReference>
<dbReference type="CDD" id="cd00290">
    <property type="entry name" value="cytochrome_b_C"/>
    <property type="match status" value="1"/>
</dbReference>
<dbReference type="CDD" id="cd00284">
    <property type="entry name" value="Cytochrome_b_N"/>
    <property type="match status" value="1"/>
</dbReference>
<dbReference type="FunFam" id="1.20.810.10:FF:000002">
    <property type="entry name" value="Cytochrome b"/>
    <property type="match status" value="1"/>
</dbReference>
<dbReference type="Gene3D" id="1.20.810.10">
    <property type="entry name" value="Cytochrome Bc1 Complex, Chain C"/>
    <property type="match status" value="1"/>
</dbReference>
<dbReference type="InterPro" id="IPR005798">
    <property type="entry name" value="Cyt_b/b6_C"/>
</dbReference>
<dbReference type="InterPro" id="IPR036150">
    <property type="entry name" value="Cyt_b/b6_C_sf"/>
</dbReference>
<dbReference type="InterPro" id="IPR005797">
    <property type="entry name" value="Cyt_b/b6_N"/>
</dbReference>
<dbReference type="InterPro" id="IPR027387">
    <property type="entry name" value="Cytb/b6-like_sf"/>
</dbReference>
<dbReference type="InterPro" id="IPR030689">
    <property type="entry name" value="Cytochrome_b"/>
</dbReference>
<dbReference type="InterPro" id="IPR048260">
    <property type="entry name" value="Cytochrome_b_C_euk/bac"/>
</dbReference>
<dbReference type="InterPro" id="IPR048259">
    <property type="entry name" value="Cytochrome_b_N_euk/bac"/>
</dbReference>
<dbReference type="InterPro" id="IPR016174">
    <property type="entry name" value="Di-haem_cyt_TM"/>
</dbReference>
<dbReference type="PANTHER" id="PTHR19271">
    <property type="entry name" value="CYTOCHROME B"/>
    <property type="match status" value="1"/>
</dbReference>
<dbReference type="PANTHER" id="PTHR19271:SF16">
    <property type="entry name" value="CYTOCHROME B"/>
    <property type="match status" value="1"/>
</dbReference>
<dbReference type="Pfam" id="PF00032">
    <property type="entry name" value="Cytochrom_B_C"/>
    <property type="match status" value="1"/>
</dbReference>
<dbReference type="Pfam" id="PF00033">
    <property type="entry name" value="Cytochrome_B"/>
    <property type="match status" value="1"/>
</dbReference>
<dbReference type="PIRSF" id="PIRSF038885">
    <property type="entry name" value="COB"/>
    <property type="match status" value="1"/>
</dbReference>
<dbReference type="SUPFAM" id="SSF81648">
    <property type="entry name" value="a domain/subunit of cytochrome bc1 complex (Ubiquinol-cytochrome c reductase)"/>
    <property type="match status" value="1"/>
</dbReference>
<dbReference type="SUPFAM" id="SSF81342">
    <property type="entry name" value="Transmembrane di-heme cytochromes"/>
    <property type="match status" value="1"/>
</dbReference>
<dbReference type="PROSITE" id="PS51003">
    <property type="entry name" value="CYTB_CTER"/>
    <property type="match status" value="1"/>
</dbReference>
<dbReference type="PROSITE" id="PS51002">
    <property type="entry name" value="CYTB_NTER"/>
    <property type="match status" value="1"/>
</dbReference>